<reference key="1">
    <citation type="journal article" date="2011" name="BMC Genomics">
        <title>Complete genome sequence of the filamentous anoxygenic phototrophic bacterium Chloroflexus aurantiacus.</title>
        <authorList>
            <person name="Tang K.H."/>
            <person name="Barry K."/>
            <person name="Chertkov O."/>
            <person name="Dalin E."/>
            <person name="Han C.S."/>
            <person name="Hauser L.J."/>
            <person name="Honchak B.M."/>
            <person name="Karbach L.E."/>
            <person name="Land M.L."/>
            <person name="Lapidus A."/>
            <person name="Larimer F.W."/>
            <person name="Mikhailova N."/>
            <person name="Pitluck S."/>
            <person name="Pierson B.K."/>
            <person name="Blankenship R.E."/>
        </authorList>
    </citation>
    <scope>NUCLEOTIDE SEQUENCE [LARGE SCALE GENOMIC DNA]</scope>
    <source>
        <strain>ATCC 29366 / DSM 635 / J-10-fl</strain>
    </source>
</reference>
<proteinExistence type="inferred from homology"/>
<accession>A9WJ51</accession>
<comment type="function">
    <text evidence="1">Single strand-specific metallo-endoribonuclease involved in late-stage 70S ribosome quality control and in maturation of the 3' terminus of the 16S rRNA.</text>
</comment>
<comment type="cofactor">
    <cofactor evidence="1">
        <name>Zn(2+)</name>
        <dbReference type="ChEBI" id="CHEBI:29105"/>
    </cofactor>
    <text evidence="1">Binds 1 zinc ion.</text>
</comment>
<comment type="subcellular location">
    <subcellularLocation>
        <location evidence="1">Cytoplasm</location>
    </subcellularLocation>
</comment>
<comment type="similarity">
    <text evidence="1">Belongs to the endoribonuclease YbeY family.</text>
</comment>
<name>YBEY_CHLAA</name>
<protein>
    <recommendedName>
        <fullName evidence="1">Endoribonuclease YbeY</fullName>
        <ecNumber evidence="1">3.1.-.-</ecNumber>
    </recommendedName>
</protein>
<keyword id="KW-0963">Cytoplasm</keyword>
<keyword id="KW-0255">Endonuclease</keyword>
<keyword id="KW-0378">Hydrolase</keyword>
<keyword id="KW-0479">Metal-binding</keyword>
<keyword id="KW-0540">Nuclease</keyword>
<keyword id="KW-1185">Reference proteome</keyword>
<keyword id="KW-0690">Ribosome biogenesis</keyword>
<keyword id="KW-0698">rRNA processing</keyword>
<keyword id="KW-0862">Zinc</keyword>
<gene>
    <name evidence="1" type="primary">ybeY</name>
    <name type="ordered locus">Caur_3323</name>
</gene>
<evidence type="ECO:0000255" key="1">
    <source>
        <dbReference type="HAMAP-Rule" id="MF_00009"/>
    </source>
</evidence>
<feature type="chain" id="PRO_0000336009" description="Endoribonuclease YbeY">
    <location>
        <begin position="1"/>
        <end position="154"/>
    </location>
</feature>
<feature type="binding site" evidence="1">
    <location>
        <position position="118"/>
    </location>
    <ligand>
        <name>Zn(2+)</name>
        <dbReference type="ChEBI" id="CHEBI:29105"/>
        <note>catalytic</note>
    </ligand>
</feature>
<feature type="binding site" evidence="1">
    <location>
        <position position="122"/>
    </location>
    <ligand>
        <name>Zn(2+)</name>
        <dbReference type="ChEBI" id="CHEBI:29105"/>
        <note>catalytic</note>
    </ligand>
</feature>
<feature type="binding site" evidence="1">
    <location>
        <position position="128"/>
    </location>
    <ligand>
        <name>Zn(2+)</name>
        <dbReference type="ChEBI" id="CHEBI:29105"/>
        <note>catalytic</note>
    </ligand>
</feature>
<organism>
    <name type="scientific">Chloroflexus aurantiacus (strain ATCC 29366 / DSM 635 / J-10-fl)</name>
    <dbReference type="NCBI Taxonomy" id="324602"/>
    <lineage>
        <taxon>Bacteria</taxon>
        <taxon>Bacillati</taxon>
        <taxon>Chloroflexota</taxon>
        <taxon>Chloroflexia</taxon>
        <taxon>Chloroflexales</taxon>
        <taxon>Chloroflexineae</taxon>
        <taxon>Chloroflexaceae</taxon>
        <taxon>Chloroflexus</taxon>
    </lineage>
</organism>
<sequence length="154" mass="17073">MIYTIEVQLDEGITADSELVERAAAAVLAAEQMPEGCEVGIRITTDDELHRLNRDFRGVDAPTDVLSFADDGHDSRFVVAPDQPRYLGDIAISYQRVLAQAAEYGHSPARELAYLTVHGVLHLLGYDHEQGPAEAARMRTREEEIMTILGLPRE</sequence>
<dbReference type="EC" id="3.1.-.-" evidence="1"/>
<dbReference type="EMBL" id="CP000909">
    <property type="protein sequence ID" value="ABY36510.1"/>
    <property type="molecule type" value="Genomic_DNA"/>
</dbReference>
<dbReference type="RefSeq" id="WP_012259163.1">
    <property type="nucleotide sequence ID" value="NC_010175.1"/>
</dbReference>
<dbReference type="RefSeq" id="YP_001636899.1">
    <property type="nucleotide sequence ID" value="NC_010175.1"/>
</dbReference>
<dbReference type="SMR" id="A9WJ51"/>
<dbReference type="FunCoup" id="A9WJ51">
    <property type="interactions" value="367"/>
</dbReference>
<dbReference type="STRING" id="324602.Caur_3323"/>
<dbReference type="EnsemblBacteria" id="ABY36510">
    <property type="protein sequence ID" value="ABY36510"/>
    <property type="gene ID" value="Caur_3323"/>
</dbReference>
<dbReference type="KEGG" id="cau:Caur_3323"/>
<dbReference type="PATRIC" id="fig|324602.8.peg.3742"/>
<dbReference type="eggNOG" id="COG0319">
    <property type="taxonomic scope" value="Bacteria"/>
</dbReference>
<dbReference type="HOGENOM" id="CLU_106710_3_0_0"/>
<dbReference type="InParanoid" id="A9WJ51"/>
<dbReference type="Proteomes" id="UP000002008">
    <property type="component" value="Chromosome"/>
</dbReference>
<dbReference type="GO" id="GO:0005737">
    <property type="term" value="C:cytoplasm"/>
    <property type="evidence" value="ECO:0007669"/>
    <property type="project" value="UniProtKB-SubCell"/>
</dbReference>
<dbReference type="GO" id="GO:0004222">
    <property type="term" value="F:metalloendopeptidase activity"/>
    <property type="evidence" value="ECO:0007669"/>
    <property type="project" value="InterPro"/>
</dbReference>
<dbReference type="GO" id="GO:0004521">
    <property type="term" value="F:RNA endonuclease activity"/>
    <property type="evidence" value="ECO:0007669"/>
    <property type="project" value="UniProtKB-UniRule"/>
</dbReference>
<dbReference type="GO" id="GO:0008270">
    <property type="term" value="F:zinc ion binding"/>
    <property type="evidence" value="ECO:0007669"/>
    <property type="project" value="UniProtKB-UniRule"/>
</dbReference>
<dbReference type="GO" id="GO:0006364">
    <property type="term" value="P:rRNA processing"/>
    <property type="evidence" value="ECO:0007669"/>
    <property type="project" value="UniProtKB-UniRule"/>
</dbReference>
<dbReference type="Gene3D" id="3.40.390.30">
    <property type="entry name" value="Metalloproteases ('zincins'), catalytic domain"/>
    <property type="match status" value="1"/>
</dbReference>
<dbReference type="HAMAP" id="MF_00009">
    <property type="entry name" value="Endoribonucl_YbeY"/>
    <property type="match status" value="1"/>
</dbReference>
<dbReference type="InterPro" id="IPR023091">
    <property type="entry name" value="MetalPrtase_cat_dom_sf_prd"/>
</dbReference>
<dbReference type="InterPro" id="IPR002036">
    <property type="entry name" value="YbeY"/>
</dbReference>
<dbReference type="InterPro" id="IPR020549">
    <property type="entry name" value="YbeY_CS"/>
</dbReference>
<dbReference type="NCBIfam" id="TIGR00043">
    <property type="entry name" value="rRNA maturation RNase YbeY"/>
    <property type="match status" value="1"/>
</dbReference>
<dbReference type="PANTHER" id="PTHR46986">
    <property type="entry name" value="ENDORIBONUCLEASE YBEY, CHLOROPLASTIC"/>
    <property type="match status" value="1"/>
</dbReference>
<dbReference type="PANTHER" id="PTHR46986:SF1">
    <property type="entry name" value="ENDORIBONUCLEASE YBEY, CHLOROPLASTIC"/>
    <property type="match status" value="1"/>
</dbReference>
<dbReference type="Pfam" id="PF02130">
    <property type="entry name" value="YbeY"/>
    <property type="match status" value="1"/>
</dbReference>
<dbReference type="SUPFAM" id="SSF55486">
    <property type="entry name" value="Metalloproteases ('zincins'), catalytic domain"/>
    <property type="match status" value="1"/>
</dbReference>
<dbReference type="PROSITE" id="PS01306">
    <property type="entry name" value="UPF0054"/>
    <property type="match status" value="1"/>
</dbReference>